<dbReference type="EC" id="1.1.1.40"/>
<dbReference type="EMBL" id="AC005169">
    <property type="protein sequence ID" value="AAC62126.1"/>
    <property type="molecule type" value="Genomic_DNA"/>
</dbReference>
<dbReference type="EMBL" id="CP002685">
    <property type="protein sequence ID" value="AEC06941.1"/>
    <property type="molecule type" value="Genomic_DNA"/>
</dbReference>
<dbReference type="EMBL" id="AY062734">
    <property type="protein sequence ID" value="AAL32812.1"/>
    <property type="molecule type" value="mRNA"/>
</dbReference>
<dbReference type="EMBL" id="BT003371">
    <property type="protein sequence ID" value="AAO30034.1"/>
    <property type="molecule type" value="mRNA"/>
</dbReference>
<dbReference type="PIR" id="E84582">
    <property type="entry name" value="E84582"/>
</dbReference>
<dbReference type="RefSeq" id="NP_179580.1">
    <property type="nucleotide sequence ID" value="NM_127548.4"/>
</dbReference>
<dbReference type="SMR" id="O82191"/>
<dbReference type="BioGRID" id="1864">
    <property type="interactions" value="2"/>
</dbReference>
<dbReference type="FunCoup" id="O82191">
    <property type="interactions" value="2749"/>
</dbReference>
<dbReference type="IntAct" id="O82191">
    <property type="interactions" value="1"/>
</dbReference>
<dbReference type="STRING" id="3702.O82191"/>
<dbReference type="iPTMnet" id="O82191"/>
<dbReference type="PaxDb" id="3702-AT2G19900.1"/>
<dbReference type="ProteomicsDB" id="232200"/>
<dbReference type="EnsemblPlants" id="AT2G19900.1">
    <property type="protein sequence ID" value="AT2G19900.1"/>
    <property type="gene ID" value="AT2G19900"/>
</dbReference>
<dbReference type="GeneID" id="816509"/>
<dbReference type="Gramene" id="AT2G19900.1">
    <property type="protein sequence ID" value="AT2G19900.1"/>
    <property type="gene ID" value="AT2G19900"/>
</dbReference>
<dbReference type="KEGG" id="ath:AT2G19900"/>
<dbReference type="Araport" id="AT2G19900"/>
<dbReference type="TAIR" id="AT2G19900">
    <property type="gene designation" value="NADP-ME1"/>
</dbReference>
<dbReference type="eggNOG" id="KOG1257">
    <property type="taxonomic scope" value="Eukaryota"/>
</dbReference>
<dbReference type="HOGENOM" id="CLU_011405_5_1_1"/>
<dbReference type="InParanoid" id="O82191"/>
<dbReference type="OrthoDB" id="5365701at2759"/>
<dbReference type="PhylomeDB" id="O82191"/>
<dbReference type="BioCyc" id="ARA:AT2G19900-MONOMER"/>
<dbReference type="SABIO-RK" id="O82191"/>
<dbReference type="PRO" id="PR:O82191"/>
<dbReference type="Proteomes" id="UP000006548">
    <property type="component" value="Chromosome 2"/>
</dbReference>
<dbReference type="ExpressionAtlas" id="O82191">
    <property type="expression patterns" value="baseline and differential"/>
</dbReference>
<dbReference type="GO" id="GO:0005829">
    <property type="term" value="C:cytosol"/>
    <property type="evidence" value="ECO:0000303"/>
    <property type="project" value="TAIR"/>
</dbReference>
<dbReference type="GO" id="GO:0005739">
    <property type="term" value="C:mitochondrion"/>
    <property type="evidence" value="ECO:0007005"/>
    <property type="project" value="TAIR"/>
</dbReference>
<dbReference type="GO" id="GO:0004473">
    <property type="term" value="F:malate dehydrogenase (decarboxylating) (NADP+) activity"/>
    <property type="evidence" value="ECO:0000314"/>
    <property type="project" value="TAIR"/>
</dbReference>
<dbReference type="GO" id="GO:0046872">
    <property type="term" value="F:metal ion binding"/>
    <property type="evidence" value="ECO:0007669"/>
    <property type="project" value="UniProtKB-KW"/>
</dbReference>
<dbReference type="GO" id="GO:0051287">
    <property type="term" value="F:NAD binding"/>
    <property type="evidence" value="ECO:0007669"/>
    <property type="project" value="InterPro"/>
</dbReference>
<dbReference type="GO" id="GO:0008948">
    <property type="term" value="F:oxaloacetate decarboxylase activity"/>
    <property type="evidence" value="ECO:0007669"/>
    <property type="project" value="RHEA"/>
</dbReference>
<dbReference type="GO" id="GO:0006108">
    <property type="term" value="P:malate metabolic process"/>
    <property type="evidence" value="ECO:0000314"/>
    <property type="project" value="TAIR"/>
</dbReference>
<dbReference type="CDD" id="cd05312">
    <property type="entry name" value="NAD_bind_1_malic_enz"/>
    <property type="match status" value="1"/>
</dbReference>
<dbReference type="FunFam" id="3.40.50.10380:FF:000002">
    <property type="entry name" value="Malic enzyme"/>
    <property type="match status" value="1"/>
</dbReference>
<dbReference type="FunFam" id="3.40.50.720:FF:000067">
    <property type="entry name" value="Malic enzyme"/>
    <property type="match status" value="1"/>
</dbReference>
<dbReference type="Gene3D" id="3.40.50.10380">
    <property type="entry name" value="Malic enzyme, N-terminal domain"/>
    <property type="match status" value="1"/>
</dbReference>
<dbReference type="Gene3D" id="3.40.50.720">
    <property type="entry name" value="NAD(P)-binding Rossmann-like Domain"/>
    <property type="match status" value="1"/>
</dbReference>
<dbReference type="InterPro" id="IPR046346">
    <property type="entry name" value="Aminoacid_DH-like_N_sf"/>
</dbReference>
<dbReference type="InterPro" id="IPR015884">
    <property type="entry name" value="Malic_enzyme_CS"/>
</dbReference>
<dbReference type="InterPro" id="IPR012301">
    <property type="entry name" value="Malic_N_dom"/>
</dbReference>
<dbReference type="InterPro" id="IPR037062">
    <property type="entry name" value="Malic_N_dom_sf"/>
</dbReference>
<dbReference type="InterPro" id="IPR012302">
    <property type="entry name" value="Malic_NAD-bd"/>
</dbReference>
<dbReference type="InterPro" id="IPR001891">
    <property type="entry name" value="Malic_OxRdtase"/>
</dbReference>
<dbReference type="InterPro" id="IPR036291">
    <property type="entry name" value="NAD(P)-bd_dom_sf"/>
</dbReference>
<dbReference type="NCBIfam" id="NF010052">
    <property type="entry name" value="PRK13529.1"/>
    <property type="match status" value="1"/>
</dbReference>
<dbReference type="PANTHER" id="PTHR23406">
    <property type="entry name" value="MALIC ENZYME-RELATED"/>
    <property type="match status" value="1"/>
</dbReference>
<dbReference type="PANTHER" id="PTHR23406:SF89">
    <property type="entry name" value="NADP-DEPENDENT MALIC ENZYME 1"/>
    <property type="match status" value="1"/>
</dbReference>
<dbReference type="Pfam" id="PF00390">
    <property type="entry name" value="malic"/>
    <property type="match status" value="1"/>
</dbReference>
<dbReference type="Pfam" id="PF03949">
    <property type="entry name" value="Malic_M"/>
    <property type="match status" value="1"/>
</dbReference>
<dbReference type="PIRSF" id="PIRSF000106">
    <property type="entry name" value="ME"/>
    <property type="match status" value="1"/>
</dbReference>
<dbReference type="PRINTS" id="PR00072">
    <property type="entry name" value="MALOXRDTASE"/>
</dbReference>
<dbReference type="SMART" id="SM01274">
    <property type="entry name" value="malic"/>
    <property type="match status" value="1"/>
</dbReference>
<dbReference type="SMART" id="SM00919">
    <property type="entry name" value="Malic_M"/>
    <property type="match status" value="1"/>
</dbReference>
<dbReference type="SUPFAM" id="SSF53223">
    <property type="entry name" value="Aminoacid dehydrogenase-like, N-terminal domain"/>
    <property type="match status" value="1"/>
</dbReference>
<dbReference type="SUPFAM" id="SSF51735">
    <property type="entry name" value="NAD(P)-binding Rossmann-fold domains"/>
    <property type="match status" value="1"/>
</dbReference>
<dbReference type="PROSITE" id="PS00331">
    <property type="entry name" value="MALIC_ENZYMES"/>
    <property type="match status" value="1"/>
</dbReference>
<sequence length="581" mass="64279">MEKVTNSDLKSSVDGGVVDVYGEDSATIEHNITPWSLSVSSGYSLLRDPRYNKGLAFTEKERDTHYLRGLLPPVVLDQKLQEKRLLNNIRQYQFPLQKYMALTELQERNERLFYKLLIDNVEELLPIVYTPTVGEACQKFGSIFRRPQGLFISLKDKGKILDVLKNWPERNIQVIVVTDGERILGLGDLGCQGMGIPVGKLALYSALGGVRPSACLPVTIDVGTNNEKLLNDEFYIGLRQKRATGQEYSELLNEFMSAVKQNYGEKVLIQFEDFANHNAFELLAKYSDTHLVFNDDIQGTASVVLAGLVSAQKLTNSPLAEHTFLFLGAGEAGTGIAELIALYMSKQMNASVEESRKKIWLVDSKGLIVNSRKDSLQDFKKPWAHEHEPVKDLLGAIKAIKPTVLIGSSGVGRSFTKEVIEAMSSINERPLIMALSNPTTQSECTAEEAYTWSKGRAIFASGSPFDPVEYEGKVFVSTQANNAYIFPGFGLGLVISGAIRVHDDMLLAAAEALAGQVSKENYEKGMIYPSFSSIRKISAQIAANVATKAYELGLAGRLPRPKDIVKCAESSMYSPTYRLYR</sequence>
<proteinExistence type="evidence at protein level"/>
<organism>
    <name type="scientific">Arabidopsis thaliana</name>
    <name type="common">Mouse-ear cress</name>
    <dbReference type="NCBI Taxonomy" id="3702"/>
    <lineage>
        <taxon>Eukaryota</taxon>
        <taxon>Viridiplantae</taxon>
        <taxon>Streptophyta</taxon>
        <taxon>Embryophyta</taxon>
        <taxon>Tracheophyta</taxon>
        <taxon>Spermatophyta</taxon>
        <taxon>Magnoliopsida</taxon>
        <taxon>eudicotyledons</taxon>
        <taxon>Gunneridae</taxon>
        <taxon>Pentapetalae</taxon>
        <taxon>rosids</taxon>
        <taxon>malvids</taxon>
        <taxon>Brassicales</taxon>
        <taxon>Brassicaceae</taxon>
        <taxon>Camelineae</taxon>
        <taxon>Arabidopsis</taxon>
    </lineage>
</organism>
<keyword id="KW-0963">Cytoplasm</keyword>
<keyword id="KW-0479">Metal-binding</keyword>
<keyword id="KW-0521">NADP</keyword>
<keyword id="KW-0560">Oxidoreductase</keyword>
<keyword id="KW-1185">Reference proteome</keyword>
<accession>O82191</accession>
<reference key="1">
    <citation type="journal article" date="1999" name="Nature">
        <title>Sequence and analysis of chromosome 2 of the plant Arabidopsis thaliana.</title>
        <authorList>
            <person name="Lin X."/>
            <person name="Kaul S."/>
            <person name="Rounsley S.D."/>
            <person name="Shea T.P."/>
            <person name="Benito M.-I."/>
            <person name="Town C.D."/>
            <person name="Fujii C.Y."/>
            <person name="Mason T.M."/>
            <person name="Bowman C.L."/>
            <person name="Barnstead M.E."/>
            <person name="Feldblyum T.V."/>
            <person name="Buell C.R."/>
            <person name="Ketchum K.A."/>
            <person name="Lee J.J."/>
            <person name="Ronning C.M."/>
            <person name="Koo H.L."/>
            <person name="Moffat K.S."/>
            <person name="Cronin L.A."/>
            <person name="Shen M."/>
            <person name="Pai G."/>
            <person name="Van Aken S."/>
            <person name="Umayam L."/>
            <person name="Tallon L.J."/>
            <person name="Gill J.E."/>
            <person name="Adams M.D."/>
            <person name="Carrera A.J."/>
            <person name="Creasy T.H."/>
            <person name="Goodman H.M."/>
            <person name="Somerville C.R."/>
            <person name="Copenhaver G.P."/>
            <person name="Preuss D."/>
            <person name="Nierman W.C."/>
            <person name="White O."/>
            <person name="Eisen J.A."/>
            <person name="Salzberg S.L."/>
            <person name="Fraser C.M."/>
            <person name="Venter J.C."/>
        </authorList>
    </citation>
    <scope>NUCLEOTIDE SEQUENCE [LARGE SCALE GENOMIC DNA]</scope>
    <source>
        <strain>cv. Columbia</strain>
    </source>
</reference>
<reference key="2">
    <citation type="journal article" date="2017" name="Plant J.">
        <title>Araport11: a complete reannotation of the Arabidopsis thaliana reference genome.</title>
        <authorList>
            <person name="Cheng C.Y."/>
            <person name="Krishnakumar V."/>
            <person name="Chan A.P."/>
            <person name="Thibaud-Nissen F."/>
            <person name="Schobel S."/>
            <person name="Town C.D."/>
        </authorList>
    </citation>
    <scope>GENOME REANNOTATION</scope>
    <source>
        <strain>cv. Columbia</strain>
    </source>
</reference>
<reference key="3">
    <citation type="journal article" date="2003" name="Science">
        <title>Empirical analysis of transcriptional activity in the Arabidopsis genome.</title>
        <authorList>
            <person name="Yamada K."/>
            <person name="Lim J."/>
            <person name="Dale J.M."/>
            <person name="Chen H."/>
            <person name="Shinn P."/>
            <person name="Palm C.J."/>
            <person name="Southwick A.M."/>
            <person name="Wu H.C."/>
            <person name="Kim C.J."/>
            <person name="Nguyen M."/>
            <person name="Pham P.K."/>
            <person name="Cheuk R.F."/>
            <person name="Karlin-Newmann G."/>
            <person name="Liu S.X."/>
            <person name="Lam B."/>
            <person name="Sakano H."/>
            <person name="Wu T."/>
            <person name="Yu G."/>
            <person name="Miranda M."/>
            <person name="Quach H.L."/>
            <person name="Tripp M."/>
            <person name="Chang C.H."/>
            <person name="Lee J.M."/>
            <person name="Toriumi M.J."/>
            <person name="Chan M.M."/>
            <person name="Tang C.C."/>
            <person name="Onodera C.S."/>
            <person name="Deng J.M."/>
            <person name="Akiyama K."/>
            <person name="Ansari Y."/>
            <person name="Arakawa T."/>
            <person name="Banh J."/>
            <person name="Banno F."/>
            <person name="Bowser L."/>
            <person name="Brooks S.Y."/>
            <person name="Carninci P."/>
            <person name="Chao Q."/>
            <person name="Choy N."/>
            <person name="Enju A."/>
            <person name="Goldsmith A.D."/>
            <person name="Gurjal M."/>
            <person name="Hansen N.F."/>
            <person name="Hayashizaki Y."/>
            <person name="Johnson-Hopson C."/>
            <person name="Hsuan V.W."/>
            <person name="Iida K."/>
            <person name="Karnes M."/>
            <person name="Khan S."/>
            <person name="Koesema E."/>
            <person name="Ishida J."/>
            <person name="Jiang P.X."/>
            <person name="Jones T."/>
            <person name="Kawai J."/>
            <person name="Kamiya A."/>
            <person name="Meyers C."/>
            <person name="Nakajima M."/>
            <person name="Narusaka M."/>
            <person name="Seki M."/>
            <person name="Sakurai T."/>
            <person name="Satou M."/>
            <person name="Tamse R."/>
            <person name="Vaysberg M."/>
            <person name="Wallender E.K."/>
            <person name="Wong C."/>
            <person name="Yamamura Y."/>
            <person name="Yuan S."/>
            <person name="Shinozaki K."/>
            <person name="Davis R.W."/>
            <person name="Theologis A."/>
            <person name="Ecker J.R."/>
        </authorList>
    </citation>
    <scope>NUCLEOTIDE SEQUENCE [LARGE SCALE MRNA]</scope>
    <source>
        <strain>cv. Columbia</strain>
    </source>
</reference>
<reference key="4">
    <citation type="journal article" date="2005" name="Plant Physiol.">
        <title>A comprehensive analysis of the NADP-malic enzyme gene family of Arabidopsis.</title>
        <authorList>
            <person name="Wheeler M.C."/>
            <person name="Tronconi M.A."/>
            <person name="Drincovich M.F."/>
            <person name="Andreo C.S."/>
            <person name="Fluegge U.-I."/>
            <person name="Maurino V.G."/>
        </authorList>
    </citation>
    <scope>DEVELOPMENTAL STAGE</scope>
    <scope>TISSUE SPECIFICITY</scope>
    <scope>CATALYTIC ACTIVITY</scope>
    <scope>BIOPHYSICOCHEMICAL PROPERTIES</scope>
    <scope>SUBUNIT</scope>
    <scope>GENE FAMILY</scope>
    <scope>NOMENCLATURE</scope>
    <source>
        <strain>cv. Columbia</strain>
    </source>
</reference>
<comment type="catalytic activity">
    <reaction evidence="2">
        <text>(S)-malate + NADP(+) = pyruvate + CO2 + NADPH</text>
        <dbReference type="Rhea" id="RHEA:18253"/>
        <dbReference type="ChEBI" id="CHEBI:15361"/>
        <dbReference type="ChEBI" id="CHEBI:15589"/>
        <dbReference type="ChEBI" id="CHEBI:16526"/>
        <dbReference type="ChEBI" id="CHEBI:57783"/>
        <dbReference type="ChEBI" id="CHEBI:58349"/>
        <dbReference type="EC" id="1.1.1.40"/>
    </reaction>
</comment>
<comment type="catalytic activity">
    <reaction evidence="2">
        <text>oxaloacetate + H(+) = pyruvate + CO2</text>
        <dbReference type="Rhea" id="RHEA:15641"/>
        <dbReference type="ChEBI" id="CHEBI:15361"/>
        <dbReference type="ChEBI" id="CHEBI:15378"/>
        <dbReference type="ChEBI" id="CHEBI:16452"/>
        <dbReference type="ChEBI" id="CHEBI:16526"/>
        <dbReference type="EC" id="1.1.1.40"/>
    </reaction>
</comment>
<comment type="cofactor">
    <cofactor evidence="1">
        <name>Mg(2+)</name>
        <dbReference type="ChEBI" id="CHEBI:18420"/>
    </cofactor>
    <cofactor evidence="1">
        <name>Mn(2+)</name>
        <dbReference type="ChEBI" id="CHEBI:29035"/>
    </cofactor>
    <text evidence="1">Divalent metal cations. Prefers magnesium or manganese.</text>
</comment>
<comment type="biophysicochemical properties">
    <kinetics>
        <KM evidence="2">205 uM for NADP (at pH 7.5)</KM>
        <KM evidence="2">2.96 mM for malate (at pH 7.5)</KM>
        <text>kcat is 38.7 sec(-1) with NADP as substrate (at pH 7.5).</text>
    </kinetics>
</comment>
<comment type="subunit">
    <text evidence="2">Homohexamers and homooctamers.</text>
</comment>
<comment type="subcellular location">
    <subcellularLocation>
        <location evidence="1">Cytoplasm</location>
    </subcellularLocation>
</comment>
<comment type="tissue specificity">
    <text evidence="2">Specifically expressed in roots (only in steles of secondary roots).</text>
</comment>
<comment type="developmental stage">
    <text evidence="2">During embryogenesis, present only in the embryo from the torpedo stage onward. During germination, first restricted to the radicle to later become more pronounced in the root tip. Expressed in hypocotyl and cotyledons 5 days after imbibition.</text>
</comment>
<comment type="similarity">
    <text evidence="3">Belongs to the malic enzymes family.</text>
</comment>
<feature type="chain" id="PRO_0000420149" description="NADP-dependent malic enzyme 1">
    <location>
        <begin position="1"/>
        <end position="581"/>
    </location>
</feature>
<feature type="active site" description="Proton donor" evidence="1">
    <location>
        <position position="129"/>
    </location>
</feature>
<feature type="active site" description="Proton acceptor" evidence="1">
    <location>
        <position position="200"/>
    </location>
</feature>
<feature type="binding site" evidence="1">
    <location>
        <position position="182"/>
    </location>
    <ligand>
        <name>NADP(+)</name>
        <dbReference type="ChEBI" id="CHEBI:58349"/>
    </ligand>
</feature>
<feature type="binding site" evidence="1">
    <location>
        <position position="272"/>
    </location>
    <ligand>
        <name>a divalent metal cation</name>
        <dbReference type="ChEBI" id="CHEBI:60240"/>
    </ligand>
</feature>
<feature type="binding site" evidence="1">
    <location>
        <position position="273"/>
    </location>
    <ligand>
        <name>a divalent metal cation</name>
        <dbReference type="ChEBI" id="CHEBI:60240"/>
    </ligand>
</feature>
<feature type="binding site" evidence="1">
    <location>
        <position position="296"/>
    </location>
    <ligand>
        <name>a divalent metal cation</name>
        <dbReference type="ChEBI" id="CHEBI:60240"/>
    </ligand>
</feature>
<feature type="binding site" evidence="1">
    <location>
        <position position="296"/>
    </location>
    <ligand>
        <name>NADP(+)</name>
        <dbReference type="ChEBI" id="CHEBI:58349"/>
    </ligand>
</feature>
<feature type="binding site" evidence="1">
    <location>
        <begin position="325"/>
        <end position="341"/>
    </location>
    <ligand>
        <name>NADP(+)</name>
        <dbReference type="ChEBI" id="CHEBI:58349"/>
    </ligand>
</feature>
<feature type="binding site" evidence="1">
    <location>
        <position position="437"/>
    </location>
    <ligand>
        <name>NADP(+)</name>
        <dbReference type="ChEBI" id="CHEBI:58349"/>
    </ligand>
</feature>
<feature type="site" description="Important for activity" evidence="1">
    <location>
        <position position="296"/>
    </location>
</feature>
<gene>
    <name type="primary">NADP-ME1</name>
    <name type="ordered locus">At2g19900</name>
    <name type="ORF">F6F22.7</name>
</gene>
<evidence type="ECO:0000250" key="1"/>
<evidence type="ECO:0000269" key="2">
    <source>
    </source>
</evidence>
<evidence type="ECO:0000305" key="3"/>
<name>MAOP1_ARATH</name>
<protein>
    <recommendedName>
        <fullName>NADP-dependent malic enzyme 1</fullName>
        <shortName>AtNADP-ME1</shortName>
        <shortName>NADP-malic enzyme 1</shortName>
        <ecNumber>1.1.1.40</ecNumber>
    </recommendedName>
</protein>